<gene>
    <name type="ORF">RCOM_0464280</name>
</gene>
<name>CSPL4_RICCO</name>
<dbReference type="EMBL" id="EQ974093">
    <property type="protein sequence ID" value="EEF33917.1"/>
    <property type="molecule type" value="Genomic_DNA"/>
</dbReference>
<dbReference type="EMBL" id="EG680260">
    <property type="status" value="NOT_ANNOTATED_CDS"/>
    <property type="molecule type" value="mRNA"/>
</dbReference>
<dbReference type="EMBL" id="EG692830">
    <property type="status" value="NOT_ANNOTATED_CDS"/>
    <property type="molecule type" value="mRNA"/>
</dbReference>
<dbReference type="RefSeq" id="XP_002528434.1">
    <property type="nucleotide sequence ID" value="XM_002528388.2"/>
</dbReference>
<dbReference type="FunCoup" id="B9SR15">
    <property type="interactions" value="352"/>
</dbReference>
<dbReference type="STRING" id="3988.B9SR15"/>
<dbReference type="KEGG" id="rcu:8265958"/>
<dbReference type="eggNOG" id="ENOG502QQ76">
    <property type="taxonomic scope" value="Eukaryota"/>
</dbReference>
<dbReference type="InParanoid" id="B9SR15"/>
<dbReference type="OMA" id="FRVACFI"/>
<dbReference type="OrthoDB" id="1907587at2759"/>
<dbReference type="Proteomes" id="UP000008311">
    <property type="component" value="Unassembled WGS sequence"/>
</dbReference>
<dbReference type="GO" id="GO:0005886">
    <property type="term" value="C:plasma membrane"/>
    <property type="evidence" value="ECO:0007669"/>
    <property type="project" value="UniProtKB-SubCell"/>
</dbReference>
<dbReference type="InterPro" id="IPR006702">
    <property type="entry name" value="CASP_dom"/>
</dbReference>
<dbReference type="PANTHER" id="PTHR33573">
    <property type="entry name" value="CASP-LIKE PROTEIN 4A4"/>
    <property type="match status" value="1"/>
</dbReference>
<dbReference type="PANTHER" id="PTHR33573:SF56">
    <property type="entry name" value="CASP-LIKE PROTEIN 4C1"/>
    <property type="match status" value="1"/>
</dbReference>
<dbReference type="Pfam" id="PF04535">
    <property type="entry name" value="CASP_dom"/>
    <property type="match status" value="1"/>
</dbReference>
<feature type="chain" id="PRO_0000376096" description="CASP-like protein 4C1">
    <location>
        <begin position="1"/>
        <end position="192"/>
    </location>
</feature>
<feature type="topological domain" description="Cytoplasmic" evidence="2">
    <location>
        <begin position="1"/>
        <end position="40"/>
    </location>
</feature>
<feature type="transmembrane region" description="Helical" evidence="2">
    <location>
        <begin position="41"/>
        <end position="61"/>
    </location>
</feature>
<feature type="topological domain" description="Extracellular" evidence="2">
    <location>
        <begin position="62"/>
        <end position="75"/>
    </location>
</feature>
<feature type="transmembrane region" description="Helical" evidence="2">
    <location>
        <begin position="76"/>
        <end position="96"/>
    </location>
</feature>
<feature type="topological domain" description="Cytoplasmic" evidence="2">
    <location>
        <begin position="97"/>
        <end position="107"/>
    </location>
</feature>
<feature type="transmembrane region" description="Helical" evidence="2">
    <location>
        <begin position="108"/>
        <end position="128"/>
    </location>
</feature>
<feature type="topological domain" description="Extracellular" evidence="2">
    <location>
        <begin position="129"/>
        <end position="156"/>
    </location>
</feature>
<feature type="transmembrane region" description="Helical" evidence="2">
    <location>
        <begin position="157"/>
        <end position="177"/>
    </location>
</feature>
<feature type="topological domain" description="Cytoplasmic" evidence="2">
    <location>
        <begin position="178"/>
        <end position="192"/>
    </location>
</feature>
<feature type="region of interest" description="Disordered" evidence="3">
    <location>
        <begin position="1"/>
        <end position="23"/>
    </location>
</feature>
<feature type="compositionally biased region" description="Polar residues" evidence="3">
    <location>
        <begin position="1"/>
        <end position="11"/>
    </location>
</feature>
<feature type="compositionally biased region" description="Pro residues" evidence="3">
    <location>
        <begin position="14"/>
        <end position="23"/>
    </location>
</feature>
<evidence type="ECO:0000250" key="1"/>
<evidence type="ECO:0000255" key="2"/>
<evidence type="ECO:0000256" key="3">
    <source>
        <dbReference type="SAM" id="MobiDB-lite"/>
    </source>
</evidence>
<evidence type="ECO:0000305" key="4"/>
<sequence>MRSPQSLRNGETPSPSPRPPRFPTPHFHSTVSLQKLKRFNLLILVFRLSTFCFSLASSVFMLTNPTWYHFDAFRYVFAANAIVAIYSLFEMAASVWEISRGNTLFPEILQVWFDFGHDQVFAYLLLSADSAATALAKTLKGGDTCAASNAFCVQSYIAIALGFAGFLFLGLSSLLSGFRVVCFLINGSRFYV</sequence>
<keyword id="KW-1003">Cell membrane</keyword>
<keyword id="KW-0472">Membrane</keyword>
<keyword id="KW-1185">Reference proteome</keyword>
<keyword id="KW-0812">Transmembrane</keyword>
<keyword id="KW-1133">Transmembrane helix</keyword>
<comment type="subunit">
    <text evidence="1">Homodimer and heterodimers.</text>
</comment>
<comment type="subcellular location">
    <subcellularLocation>
        <location evidence="1">Cell membrane</location>
        <topology evidence="1">Multi-pass membrane protein</topology>
    </subcellularLocation>
</comment>
<comment type="similarity">
    <text evidence="4">Belongs to the Casparian strip membrane proteins (CASP) family.</text>
</comment>
<organism>
    <name type="scientific">Ricinus communis</name>
    <name type="common">Castor bean</name>
    <dbReference type="NCBI Taxonomy" id="3988"/>
    <lineage>
        <taxon>Eukaryota</taxon>
        <taxon>Viridiplantae</taxon>
        <taxon>Streptophyta</taxon>
        <taxon>Embryophyta</taxon>
        <taxon>Tracheophyta</taxon>
        <taxon>Spermatophyta</taxon>
        <taxon>Magnoliopsida</taxon>
        <taxon>eudicotyledons</taxon>
        <taxon>Gunneridae</taxon>
        <taxon>Pentapetalae</taxon>
        <taxon>rosids</taxon>
        <taxon>fabids</taxon>
        <taxon>Malpighiales</taxon>
        <taxon>Euphorbiaceae</taxon>
        <taxon>Acalyphoideae</taxon>
        <taxon>Acalypheae</taxon>
        <taxon>Ricinus</taxon>
    </lineage>
</organism>
<accession>B9SR15</accession>
<reference key="1">
    <citation type="journal article" date="2010" name="Nat. Biotechnol.">
        <title>Draft genome sequence of the oilseed species Ricinus communis.</title>
        <authorList>
            <person name="Chan A.P."/>
            <person name="Crabtree J."/>
            <person name="Zhao Q."/>
            <person name="Lorenzi H."/>
            <person name="Orvis J."/>
            <person name="Puiu D."/>
            <person name="Melake-Berhan A."/>
            <person name="Jones K.M."/>
            <person name="Redman J."/>
            <person name="Chen G."/>
            <person name="Cahoon E.B."/>
            <person name="Gedil M."/>
            <person name="Stanke M."/>
            <person name="Haas B.J."/>
            <person name="Wortman J.R."/>
            <person name="Fraser-Liggett C.M."/>
            <person name="Ravel J."/>
            <person name="Rabinowicz P.D."/>
        </authorList>
    </citation>
    <scope>NUCLEOTIDE SEQUENCE [LARGE SCALE GENOMIC DNA]</scope>
    <source>
        <strain>cv. Hale</strain>
    </source>
</reference>
<reference key="2">
    <citation type="submission" date="2006-11" db="EMBL/GenBank/DDBJ databases">
        <title>Ricinus communis EST sequencing.</title>
        <authorList>
            <person name="Melake A."/>
            <person name="Chan A."/>
            <person name="Orvis J."/>
            <person name="Zhao Q."/>
            <person name="Wortman J."/>
            <person name="Utterback T."/>
            <person name="Rosovitz M.J."/>
            <person name="Fraser C."/>
            <person name="Ravel J."/>
            <person name="Rabinowicz P."/>
        </authorList>
    </citation>
    <scope>NUCLEOTIDE SEQUENCE [LARGE SCALE MRNA]</scope>
    <source>
        <strain>cv. Hale</strain>
        <tissue>Root</tissue>
        <tissue>Seed</tissue>
    </source>
</reference>
<reference key="3">
    <citation type="journal article" date="2014" name="Plant Physiol.">
        <title>Functional and evolutionary analysis of the CASPARIAN STRIP MEMBRANE DOMAIN PROTEIN family.</title>
        <authorList>
            <person name="Roppolo D."/>
            <person name="Boeckmann B."/>
            <person name="Pfister A."/>
            <person name="Boutet E."/>
            <person name="Rubio M.C."/>
            <person name="Denervaud-Tendon V."/>
            <person name="Vermeer J.E."/>
            <person name="Gheyselinck J."/>
            <person name="Xenarios I."/>
            <person name="Geldner N."/>
        </authorList>
    </citation>
    <scope>GENE FAMILY</scope>
    <scope>NOMENCLATURE</scope>
</reference>
<proteinExistence type="evidence at transcript level"/>
<protein>
    <recommendedName>
        <fullName>CASP-like protein 4C1</fullName>
        <shortName>RcCASPL4C1</shortName>
    </recommendedName>
</protein>